<dbReference type="EC" id="5.6.1.7" evidence="1"/>
<dbReference type="EMBL" id="CP000473">
    <property type="protein sequence ID" value="ABJ87668.1"/>
    <property type="molecule type" value="Genomic_DNA"/>
</dbReference>
<dbReference type="SMR" id="Q01RQ2"/>
<dbReference type="FunCoup" id="Q01RQ2">
    <property type="interactions" value="876"/>
</dbReference>
<dbReference type="STRING" id="234267.Acid_6747"/>
<dbReference type="KEGG" id="sus:Acid_6747"/>
<dbReference type="eggNOG" id="COG0459">
    <property type="taxonomic scope" value="Bacteria"/>
</dbReference>
<dbReference type="HOGENOM" id="CLU_016503_3_0_0"/>
<dbReference type="InParanoid" id="Q01RQ2"/>
<dbReference type="OrthoDB" id="9766614at2"/>
<dbReference type="GO" id="GO:0005737">
    <property type="term" value="C:cytoplasm"/>
    <property type="evidence" value="ECO:0007669"/>
    <property type="project" value="UniProtKB-SubCell"/>
</dbReference>
<dbReference type="GO" id="GO:0005524">
    <property type="term" value="F:ATP binding"/>
    <property type="evidence" value="ECO:0007669"/>
    <property type="project" value="UniProtKB-UniRule"/>
</dbReference>
<dbReference type="GO" id="GO:0140662">
    <property type="term" value="F:ATP-dependent protein folding chaperone"/>
    <property type="evidence" value="ECO:0007669"/>
    <property type="project" value="InterPro"/>
</dbReference>
<dbReference type="GO" id="GO:0016853">
    <property type="term" value="F:isomerase activity"/>
    <property type="evidence" value="ECO:0007669"/>
    <property type="project" value="UniProtKB-KW"/>
</dbReference>
<dbReference type="GO" id="GO:0051082">
    <property type="term" value="F:unfolded protein binding"/>
    <property type="evidence" value="ECO:0007669"/>
    <property type="project" value="UniProtKB-UniRule"/>
</dbReference>
<dbReference type="GO" id="GO:0042026">
    <property type="term" value="P:protein refolding"/>
    <property type="evidence" value="ECO:0007669"/>
    <property type="project" value="UniProtKB-UniRule"/>
</dbReference>
<dbReference type="CDD" id="cd03344">
    <property type="entry name" value="GroEL"/>
    <property type="match status" value="1"/>
</dbReference>
<dbReference type="FunFam" id="1.10.560.10:FF:000001">
    <property type="entry name" value="60 kDa chaperonin"/>
    <property type="match status" value="1"/>
</dbReference>
<dbReference type="FunFam" id="3.50.7.10:FF:000001">
    <property type="entry name" value="60 kDa chaperonin"/>
    <property type="match status" value="1"/>
</dbReference>
<dbReference type="Gene3D" id="3.50.7.10">
    <property type="entry name" value="GroEL"/>
    <property type="match status" value="1"/>
</dbReference>
<dbReference type="Gene3D" id="1.10.560.10">
    <property type="entry name" value="GroEL-like equatorial domain"/>
    <property type="match status" value="1"/>
</dbReference>
<dbReference type="Gene3D" id="3.30.260.10">
    <property type="entry name" value="TCP-1-like chaperonin intermediate domain"/>
    <property type="match status" value="1"/>
</dbReference>
<dbReference type="HAMAP" id="MF_00600">
    <property type="entry name" value="CH60"/>
    <property type="match status" value="1"/>
</dbReference>
<dbReference type="InterPro" id="IPR018370">
    <property type="entry name" value="Chaperonin_Cpn60_CS"/>
</dbReference>
<dbReference type="InterPro" id="IPR001844">
    <property type="entry name" value="Cpn60/GroEL"/>
</dbReference>
<dbReference type="InterPro" id="IPR002423">
    <property type="entry name" value="Cpn60/GroEL/TCP-1"/>
</dbReference>
<dbReference type="InterPro" id="IPR027409">
    <property type="entry name" value="GroEL-like_apical_dom_sf"/>
</dbReference>
<dbReference type="InterPro" id="IPR027413">
    <property type="entry name" value="GROEL-like_equatorial_sf"/>
</dbReference>
<dbReference type="InterPro" id="IPR027410">
    <property type="entry name" value="TCP-1-like_intermed_sf"/>
</dbReference>
<dbReference type="NCBIfam" id="TIGR02348">
    <property type="entry name" value="GroEL"/>
    <property type="match status" value="1"/>
</dbReference>
<dbReference type="NCBIfam" id="NF000592">
    <property type="entry name" value="PRK00013.1"/>
    <property type="match status" value="1"/>
</dbReference>
<dbReference type="NCBIfam" id="NF009487">
    <property type="entry name" value="PRK12849.1"/>
    <property type="match status" value="1"/>
</dbReference>
<dbReference type="NCBIfam" id="NF009488">
    <property type="entry name" value="PRK12850.1"/>
    <property type="match status" value="1"/>
</dbReference>
<dbReference type="NCBIfam" id="NF009489">
    <property type="entry name" value="PRK12851.1"/>
    <property type="match status" value="1"/>
</dbReference>
<dbReference type="PANTHER" id="PTHR45633">
    <property type="entry name" value="60 KDA HEAT SHOCK PROTEIN, MITOCHONDRIAL"/>
    <property type="match status" value="1"/>
</dbReference>
<dbReference type="Pfam" id="PF00118">
    <property type="entry name" value="Cpn60_TCP1"/>
    <property type="match status" value="1"/>
</dbReference>
<dbReference type="PRINTS" id="PR00298">
    <property type="entry name" value="CHAPERONIN60"/>
</dbReference>
<dbReference type="SUPFAM" id="SSF52029">
    <property type="entry name" value="GroEL apical domain-like"/>
    <property type="match status" value="1"/>
</dbReference>
<dbReference type="SUPFAM" id="SSF48592">
    <property type="entry name" value="GroEL equatorial domain-like"/>
    <property type="match status" value="1"/>
</dbReference>
<dbReference type="SUPFAM" id="SSF54849">
    <property type="entry name" value="GroEL-intermediate domain like"/>
    <property type="match status" value="1"/>
</dbReference>
<dbReference type="PROSITE" id="PS00296">
    <property type="entry name" value="CHAPERONINS_CPN60"/>
    <property type="match status" value="1"/>
</dbReference>
<feature type="chain" id="PRO_1000025835" description="Chaperonin GroEL">
    <location>
        <begin position="1"/>
        <end position="542"/>
    </location>
</feature>
<feature type="binding site" evidence="1">
    <location>
        <begin position="29"/>
        <end position="32"/>
    </location>
    <ligand>
        <name>ATP</name>
        <dbReference type="ChEBI" id="CHEBI:30616"/>
    </ligand>
</feature>
<feature type="binding site" evidence="1">
    <location>
        <position position="50"/>
    </location>
    <ligand>
        <name>ATP</name>
        <dbReference type="ChEBI" id="CHEBI:30616"/>
    </ligand>
</feature>
<feature type="binding site" evidence="1">
    <location>
        <begin position="86"/>
        <end position="90"/>
    </location>
    <ligand>
        <name>ATP</name>
        <dbReference type="ChEBI" id="CHEBI:30616"/>
    </ligand>
</feature>
<feature type="binding site" evidence="1">
    <location>
        <position position="413"/>
    </location>
    <ligand>
        <name>ATP</name>
        <dbReference type="ChEBI" id="CHEBI:30616"/>
    </ligand>
</feature>
<feature type="binding site" evidence="1">
    <location>
        <begin position="477"/>
        <end position="479"/>
    </location>
    <ligand>
        <name>ATP</name>
        <dbReference type="ChEBI" id="CHEBI:30616"/>
    </ligand>
</feature>
<feature type="binding site" evidence="1">
    <location>
        <position position="493"/>
    </location>
    <ligand>
        <name>ATP</name>
        <dbReference type="ChEBI" id="CHEBI:30616"/>
    </ligand>
</feature>
<evidence type="ECO:0000255" key="1">
    <source>
        <dbReference type="HAMAP-Rule" id="MF_00600"/>
    </source>
</evidence>
<comment type="function">
    <text evidence="1">Together with its co-chaperonin GroES, plays an essential role in assisting protein folding. The GroEL-GroES system forms a nano-cage that allows encapsulation of the non-native substrate proteins and provides a physical environment optimized to promote and accelerate protein folding.</text>
</comment>
<comment type="catalytic activity">
    <reaction evidence="1">
        <text>ATP + H2O + a folded polypeptide = ADP + phosphate + an unfolded polypeptide.</text>
        <dbReference type="EC" id="5.6.1.7"/>
    </reaction>
</comment>
<comment type="subunit">
    <text evidence="1">Forms a cylinder of 14 subunits composed of two heptameric rings stacked back-to-back. Interacts with the co-chaperonin GroES.</text>
</comment>
<comment type="subcellular location">
    <subcellularLocation>
        <location evidence="1">Cytoplasm</location>
    </subcellularLocation>
</comment>
<comment type="similarity">
    <text evidence="1">Belongs to the chaperonin (HSP60) family.</text>
</comment>
<reference key="1">
    <citation type="journal article" date="2009" name="Appl. Environ. Microbiol.">
        <title>Three genomes from the phylum Acidobacteria provide insight into the lifestyles of these microorganisms in soils.</title>
        <authorList>
            <person name="Ward N.L."/>
            <person name="Challacombe J.F."/>
            <person name="Janssen P.H."/>
            <person name="Henrissat B."/>
            <person name="Coutinho P.M."/>
            <person name="Wu M."/>
            <person name="Xie G."/>
            <person name="Haft D.H."/>
            <person name="Sait M."/>
            <person name="Badger J."/>
            <person name="Barabote R.D."/>
            <person name="Bradley B."/>
            <person name="Brettin T.S."/>
            <person name="Brinkac L.M."/>
            <person name="Bruce D."/>
            <person name="Creasy T."/>
            <person name="Daugherty S.C."/>
            <person name="Davidsen T.M."/>
            <person name="DeBoy R.T."/>
            <person name="Detter J.C."/>
            <person name="Dodson R.J."/>
            <person name="Durkin A.S."/>
            <person name="Ganapathy A."/>
            <person name="Gwinn-Giglio M."/>
            <person name="Han C.S."/>
            <person name="Khouri H."/>
            <person name="Kiss H."/>
            <person name="Kothari S.P."/>
            <person name="Madupu R."/>
            <person name="Nelson K.E."/>
            <person name="Nelson W.C."/>
            <person name="Paulsen I."/>
            <person name="Penn K."/>
            <person name="Ren Q."/>
            <person name="Rosovitz M.J."/>
            <person name="Selengut J.D."/>
            <person name="Shrivastava S."/>
            <person name="Sullivan S.A."/>
            <person name="Tapia R."/>
            <person name="Thompson L.S."/>
            <person name="Watkins K.L."/>
            <person name="Yang Q."/>
            <person name="Yu C."/>
            <person name="Zafar N."/>
            <person name="Zhou L."/>
            <person name="Kuske C.R."/>
        </authorList>
    </citation>
    <scope>NUCLEOTIDE SEQUENCE [LARGE SCALE GENOMIC DNA]</scope>
    <source>
        <strain>Ellin6076</strain>
    </source>
</reference>
<accession>Q01RQ2</accession>
<name>CH60_SOLUE</name>
<keyword id="KW-0067">ATP-binding</keyword>
<keyword id="KW-0143">Chaperone</keyword>
<keyword id="KW-0963">Cytoplasm</keyword>
<keyword id="KW-0413">Isomerase</keyword>
<keyword id="KW-0547">Nucleotide-binding</keyword>
<sequence length="542" mass="57549">MAKQIVYSEASRQAILRGVNQLADAVKVTLGPKGRNVVLEKKFGGPTITKDGVTVAKEIELKDPLENMGAQMVREVASKTSDVAGDGTTTATILAQSIYREGVKAVAAGANPMALKRGIDKAVELATEEVKKLSKPVSGDMIAQVGTISANSDKTIGNIIADAMKKVGKDGVITVEESKTMVTELDTVEGMQFDRGYLSPYFVSDAERMEAVLEDPYILIHEKKISNMKDLLPLLEQIARSGKPLLIIAEEVEGEALATLVVNKLRGTLNACAVKAPGFGDRRKAMLEDIGILTGGKPIMEDIGVKLEGVRLEDLGRAKRVTVDKDNTTIVDGAGNPKGIEGRIKQLRAQIDETTSDYDREKLQERLAKLAGGVAVIKVGAATETEMKEKKARVEDALHATRAAVEEGIVPGGGVALLRAAKALATFKVDGDEQIGVSIVKRACEEPLRQIVSNSGTEGAIVVDKVRENANNNYGYNAATDTYEDLVAAGVIDPTKVTRSALQHAASIAGLMLTTEAMIAEIPEKKSAPAGGPGGHGPEMDY</sequence>
<protein>
    <recommendedName>
        <fullName evidence="1">Chaperonin GroEL</fullName>
        <ecNumber evidence="1">5.6.1.7</ecNumber>
    </recommendedName>
    <alternativeName>
        <fullName evidence="1">60 kDa chaperonin</fullName>
    </alternativeName>
    <alternativeName>
        <fullName evidence="1">Chaperonin-60</fullName>
        <shortName evidence="1">Cpn60</shortName>
    </alternativeName>
</protein>
<gene>
    <name evidence="1" type="primary">groEL</name>
    <name evidence="1" type="synonym">groL</name>
    <name type="ordered locus">Acid_6747</name>
</gene>
<organism>
    <name type="scientific">Solibacter usitatus (strain Ellin6076)</name>
    <dbReference type="NCBI Taxonomy" id="234267"/>
    <lineage>
        <taxon>Bacteria</taxon>
        <taxon>Pseudomonadati</taxon>
        <taxon>Acidobacteriota</taxon>
        <taxon>Terriglobia</taxon>
        <taxon>Bryobacterales</taxon>
        <taxon>Solibacteraceae</taxon>
        <taxon>Candidatus Solibacter</taxon>
    </lineage>
</organism>
<proteinExistence type="inferred from homology"/>